<accession>P73297</accession>
<name>RPOA_SYNY3</name>
<evidence type="ECO:0000250" key="1"/>
<evidence type="ECO:0000255" key="2">
    <source>
        <dbReference type="HAMAP-Rule" id="MF_00059"/>
    </source>
</evidence>
<evidence type="ECO:0007829" key="3">
    <source>
        <dbReference type="PDB" id="8GZG"/>
    </source>
</evidence>
<evidence type="ECO:0007829" key="4">
    <source>
        <dbReference type="PDB" id="8GZH"/>
    </source>
</evidence>
<protein>
    <recommendedName>
        <fullName evidence="2">DNA-directed RNA polymerase subunit alpha</fullName>
        <shortName evidence="2">RNAP subunit alpha</shortName>
        <ecNumber evidence="2">2.7.7.6</ecNumber>
    </recommendedName>
    <alternativeName>
        <fullName evidence="2">RNA polymerase subunit alpha</fullName>
    </alternativeName>
    <alternativeName>
        <fullName evidence="2">Transcriptase subunit alpha</fullName>
    </alternativeName>
</protein>
<organism>
    <name type="scientific">Synechocystis sp. (strain ATCC 27184 / PCC 6803 / Kazusa)</name>
    <dbReference type="NCBI Taxonomy" id="1111708"/>
    <lineage>
        <taxon>Bacteria</taxon>
        <taxon>Bacillati</taxon>
        <taxon>Cyanobacteriota</taxon>
        <taxon>Cyanophyceae</taxon>
        <taxon>Synechococcales</taxon>
        <taxon>Merismopediaceae</taxon>
        <taxon>Synechocystis</taxon>
    </lineage>
</organism>
<sequence length="314" mass="35004">MAQFQIECVESSTRKNQQQYSKFSLEPLDRGQGTTVGNALRRVLLSNLPGAAVTAIRIAGVNHEFATILGVREDVLEIMLNMKELVLKSYTDQPQIGRLTAIGPGTVTAAQFEVPSEVEVIDPNQYIATLAEGAKLEMEFRVERGVGYRVIERGKDENSSLDFLQIDSVFMPVTKVNYTVEDIRADGMSPKDRLILDIWTNGSIQPREALSEASDIIANLFIPLKDLNELEAAHSDYQDEVNPESQIPIEELQLSVRAYNCLKRAQINSVADLLEYSQEDLLEIKNFGLKSAEEVIEALQKRLGITLPHEKAKA</sequence>
<feature type="chain" id="PRO_0000175404" description="DNA-directed RNA polymerase subunit alpha">
    <location>
        <begin position="1"/>
        <end position="314"/>
    </location>
</feature>
<feature type="region of interest" description="Alpha N-terminal domain (alpha-NTD)" evidence="2">
    <location>
        <begin position="1"/>
        <end position="228"/>
    </location>
</feature>
<feature type="region of interest" description="Alpha C-terminal domain (alpha-CTD)" evidence="2">
    <location>
        <begin position="243"/>
        <end position="314"/>
    </location>
</feature>
<feature type="strand" evidence="4">
    <location>
        <begin position="5"/>
        <end position="10"/>
    </location>
</feature>
<feature type="strand" evidence="4">
    <location>
        <begin position="15"/>
        <end position="17"/>
    </location>
</feature>
<feature type="strand" evidence="4">
    <location>
        <begin position="19"/>
        <end position="28"/>
    </location>
</feature>
<feature type="helix" evidence="4">
    <location>
        <begin position="32"/>
        <end position="46"/>
    </location>
</feature>
<feature type="strand" evidence="4">
    <location>
        <begin position="49"/>
        <end position="58"/>
    </location>
</feature>
<feature type="strand" evidence="3">
    <location>
        <begin position="63"/>
        <end position="65"/>
    </location>
</feature>
<feature type="strand" evidence="4">
    <location>
        <begin position="71"/>
        <end position="73"/>
    </location>
</feature>
<feature type="helix" evidence="4">
    <location>
        <begin position="75"/>
        <end position="83"/>
    </location>
</feature>
<feature type="strand" evidence="4">
    <location>
        <begin position="87"/>
        <end position="93"/>
    </location>
</feature>
<feature type="strand" evidence="4">
    <location>
        <begin position="95"/>
        <end position="108"/>
    </location>
</feature>
<feature type="helix" evidence="4">
    <location>
        <begin position="109"/>
        <end position="111"/>
    </location>
</feature>
<feature type="strand" evidence="4">
    <location>
        <begin position="116"/>
        <end position="121"/>
    </location>
</feature>
<feature type="strand" evidence="4">
    <location>
        <begin position="126"/>
        <end position="130"/>
    </location>
</feature>
<feature type="strand" evidence="4">
    <location>
        <begin position="135"/>
        <end position="148"/>
    </location>
</feature>
<feature type="strand" evidence="4">
    <location>
        <begin position="173"/>
        <end position="183"/>
    </location>
</feature>
<feature type="strand" evidence="4">
    <location>
        <begin position="191"/>
        <end position="200"/>
    </location>
</feature>
<feature type="strand" evidence="4">
    <location>
        <begin position="202"/>
        <end position="204"/>
    </location>
</feature>
<feature type="helix" evidence="4">
    <location>
        <begin position="206"/>
        <end position="226"/>
    </location>
</feature>
<keyword id="KW-0002">3D-structure</keyword>
<keyword id="KW-0240">DNA-directed RNA polymerase</keyword>
<keyword id="KW-0548">Nucleotidyltransferase</keyword>
<keyword id="KW-1185">Reference proteome</keyword>
<keyword id="KW-0804">Transcription</keyword>
<keyword id="KW-0808">Transferase</keyword>
<proteinExistence type="evidence at protein level"/>
<comment type="function">
    <text evidence="2">DNA-dependent RNA polymerase catalyzes the transcription of DNA into RNA using the four ribonucleoside triphosphates as substrates.</text>
</comment>
<comment type="catalytic activity">
    <reaction evidence="2">
        <text>RNA(n) + a ribonucleoside 5'-triphosphate = RNA(n+1) + diphosphate</text>
        <dbReference type="Rhea" id="RHEA:21248"/>
        <dbReference type="Rhea" id="RHEA-COMP:14527"/>
        <dbReference type="Rhea" id="RHEA-COMP:17342"/>
        <dbReference type="ChEBI" id="CHEBI:33019"/>
        <dbReference type="ChEBI" id="CHEBI:61557"/>
        <dbReference type="ChEBI" id="CHEBI:140395"/>
        <dbReference type="EC" id="2.7.7.6"/>
    </reaction>
</comment>
<comment type="subunit">
    <text evidence="1">Homodimer. In cyanobacteria the RNAP catalytic core is composed of 2 alpha, 1 beta, 1 beta', 1 gamma and 1 omega subunit. When a sigma factor is associated with the core the holoenzyme is formed, which can initiate transcription (By similarity).</text>
</comment>
<comment type="domain">
    <text evidence="2">The N-terminal domain is essential for RNAP assembly and basal transcription, whereas the C-terminal domain is involved in interaction with transcriptional regulators and with upstream promoter elements.</text>
</comment>
<comment type="similarity">
    <text evidence="2">Belongs to the RNA polymerase alpha chain family.</text>
</comment>
<gene>
    <name evidence="2" type="primary">rpoA</name>
    <name type="ordered locus">sll1818</name>
</gene>
<reference key="1">
    <citation type="journal article" date="1996" name="DNA Res.">
        <title>Sequence analysis of the genome of the unicellular cyanobacterium Synechocystis sp. strain PCC6803. II. Sequence determination of the entire genome and assignment of potential protein-coding regions.</title>
        <authorList>
            <person name="Kaneko T."/>
            <person name="Sato S."/>
            <person name="Kotani H."/>
            <person name="Tanaka A."/>
            <person name="Asamizu E."/>
            <person name="Nakamura Y."/>
            <person name="Miyajima N."/>
            <person name="Hirosawa M."/>
            <person name="Sugiura M."/>
            <person name="Sasamoto S."/>
            <person name="Kimura T."/>
            <person name="Hosouchi T."/>
            <person name="Matsuno A."/>
            <person name="Muraki A."/>
            <person name="Nakazaki N."/>
            <person name="Naruo K."/>
            <person name="Okumura S."/>
            <person name="Shimpo S."/>
            <person name="Takeuchi C."/>
            <person name="Wada T."/>
            <person name="Watanabe A."/>
            <person name="Yamada M."/>
            <person name="Yasuda M."/>
            <person name="Tabata S."/>
        </authorList>
    </citation>
    <scope>NUCLEOTIDE SEQUENCE [LARGE SCALE GENOMIC DNA]</scope>
    <source>
        <strain>ATCC 27184 / PCC 6803 / Kazusa</strain>
    </source>
</reference>
<dbReference type="EC" id="2.7.7.6" evidence="2"/>
<dbReference type="EMBL" id="BA000022">
    <property type="protein sequence ID" value="BAA17325.1"/>
    <property type="molecule type" value="Genomic_DNA"/>
</dbReference>
<dbReference type="PIR" id="S77478">
    <property type="entry name" value="S77478"/>
</dbReference>
<dbReference type="PDB" id="8GZG">
    <property type="method" value="EM"/>
    <property type="resolution" value="3.13 A"/>
    <property type="chains" value="A/B=1-314"/>
</dbReference>
<dbReference type="PDB" id="8GZH">
    <property type="method" value="EM"/>
    <property type="resolution" value="2.96 A"/>
    <property type="chains" value="A/B=1-314"/>
</dbReference>
<dbReference type="PDBsum" id="8GZG"/>
<dbReference type="PDBsum" id="8GZH"/>
<dbReference type="EMDB" id="EMD-34397"/>
<dbReference type="EMDB" id="EMD-34398"/>
<dbReference type="SMR" id="P73297"/>
<dbReference type="FunCoup" id="P73297">
    <property type="interactions" value="390"/>
</dbReference>
<dbReference type="IntAct" id="P73297">
    <property type="interactions" value="1"/>
</dbReference>
<dbReference type="STRING" id="1148.gene:10498188"/>
<dbReference type="PaxDb" id="1148-1652403"/>
<dbReference type="EnsemblBacteria" id="BAA17325">
    <property type="protein sequence ID" value="BAA17325"/>
    <property type="gene ID" value="BAA17325"/>
</dbReference>
<dbReference type="KEGG" id="syn:sll1818"/>
<dbReference type="eggNOG" id="COG0202">
    <property type="taxonomic scope" value="Bacteria"/>
</dbReference>
<dbReference type="InParanoid" id="P73297"/>
<dbReference type="PhylomeDB" id="P73297"/>
<dbReference type="Proteomes" id="UP000001425">
    <property type="component" value="Chromosome"/>
</dbReference>
<dbReference type="GO" id="GO:0005737">
    <property type="term" value="C:cytoplasm"/>
    <property type="evidence" value="ECO:0000318"/>
    <property type="project" value="GO_Central"/>
</dbReference>
<dbReference type="GO" id="GO:0000428">
    <property type="term" value="C:DNA-directed RNA polymerase complex"/>
    <property type="evidence" value="ECO:0007669"/>
    <property type="project" value="UniProtKB-KW"/>
</dbReference>
<dbReference type="GO" id="GO:0003677">
    <property type="term" value="F:DNA binding"/>
    <property type="evidence" value="ECO:0007669"/>
    <property type="project" value="UniProtKB-UniRule"/>
</dbReference>
<dbReference type="GO" id="GO:0003899">
    <property type="term" value="F:DNA-directed RNA polymerase activity"/>
    <property type="evidence" value="ECO:0007669"/>
    <property type="project" value="UniProtKB-UniRule"/>
</dbReference>
<dbReference type="GO" id="GO:0046983">
    <property type="term" value="F:protein dimerization activity"/>
    <property type="evidence" value="ECO:0007669"/>
    <property type="project" value="InterPro"/>
</dbReference>
<dbReference type="GO" id="GO:0006351">
    <property type="term" value="P:DNA-templated transcription"/>
    <property type="evidence" value="ECO:0007669"/>
    <property type="project" value="UniProtKB-UniRule"/>
</dbReference>
<dbReference type="CDD" id="cd06928">
    <property type="entry name" value="RNAP_alpha_NTD"/>
    <property type="match status" value="1"/>
</dbReference>
<dbReference type="FunFam" id="1.10.150.20:FF:000120">
    <property type="entry name" value="DNA-directed RNA polymerase subunit alpha"/>
    <property type="match status" value="1"/>
</dbReference>
<dbReference type="FunFam" id="2.170.120.12:FF:000001">
    <property type="entry name" value="DNA-directed RNA polymerase subunit alpha"/>
    <property type="match status" value="1"/>
</dbReference>
<dbReference type="Gene3D" id="1.10.150.20">
    <property type="entry name" value="5' to 3' exonuclease, C-terminal subdomain"/>
    <property type="match status" value="1"/>
</dbReference>
<dbReference type="Gene3D" id="2.170.120.12">
    <property type="entry name" value="DNA-directed RNA polymerase, insert domain"/>
    <property type="match status" value="1"/>
</dbReference>
<dbReference type="Gene3D" id="3.30.1360.10">
    <property type="entry name" value="RNA polymerase, RBP11-like subunit"/>
    <property type="match status" value="1"/>
</dbReference>
<dbReference type="HAMAP" id="MF_00059">
    <property type="entry name" value="RNApol_bact_RpoA"/>
    <property type="match status" value="1"/>
</dbReference>
<dbReference type="InterPro" id="IPR011262">
    <property type="entry name" value="DNA-dir_RNA_pol_insert"/>
</dbReference>
<dbReference type="InterPro" id="IPR011263">
    <property type="entry name" value="DNA-dir_RNA_pol_RpoA/D/Rpb3"/>
</dbReference>
<dbReference type="InterPro" id="IPR011773">
    <property type="entry name" value="DNA-dir_RpoA"/>
</dbReference>
<dbReference type="InterPro" id="IPR036603">
    <property type="entry name" value="RBP11-like"/>
</dbReference>
<dbReference type="InterPro" id="IPR011260">
    <property type="entry name" value="RNAP_asu_C"/>
</dbReference>
<dbReference type="InterPro" id="IPR036643">
    <property type="entry name" value="RNApol_insert_sf"/>
</dbReference>
<dbReference type="NCBIfam" id="NF003513">
    <property type="entry name" value="PRK05182.1-2"/>
    <property type="match status" value="1"/>
</dbReference>
<dbReference type="NCBIfam" id="NF003516">
    <property type="entry name" value="PRK05182.2-2"/>
    <property type="match status" value="1"/>
</dbReference>
<dbReference type="NCBIfam" id="NF003519">
    <property type="entry name" value="PRK05182.2-5"/>
    <property type="match status" value="1"/>
</dbReference>
<dbReference type="NCBIfam" id="TIGR02027">
    <property type="entry name" value="rpoA"/>
    <property type="match status" value="1"/>
</dbReference>
<dbReference type="Pfam" id="PF01000">
    <property type="entry name" value="RNA_pol_A_bac"/>
    <property type="match status" value="1"/>
</dbReference>
<dbReference type="Pfam" id="PF03118">
    <property type="entry name" value="RNA_pol_A_CTD"/>
    <property type="match status" value="1"/>
</dbReference>
<dbReference type="Pfam" id="PF01193">
    <property type="entry name" value="RNA_pol_L"/>
    <property type="match status" value="1"/>
</dbReference>
<dbReference type="SMART" id="SM00662">
    <property type="entry name" value="RPOLD"/>
    <property type="match status" value="1"/>
</dbReference>
<dbReference type="SUPFAM" id="SSF47789">
    <property type="entry name" value="C-terminal domain of RNA polymerase alpha subunit"/>
    <property type="match status" value="1"/>
</dbReference>
<dbReference type="SUPFAM" id="SSF56553">
    <property type="entry name" value="Insert subdomain of RNA polymerase alpha subunit"/>
    <property type="match status" value="1"/>
</dbReference>
<dbReference type="SUPFAM" id="SSF55257">
    <property type="entry name" value="RBP11-like subunits of RNA polymerase"/>
    <property type="match status" value="1"/>
</dbReference>